<protein>
    <recommendedName>
        <fullName>UPF0669 protein C6orf120 homolog</fullName>
    </recommendedName>
</protein>
<feature type="signal peptide" evidence="1">
    <location>
        <begin position="1"/>
        <end position="19"/>
    </location>
</feature>
<feature type="chain" id="PRO_0000352877" description="UPF0669 protein C6orf120 homolog">
    <location>
        <begin position="20"/>
        <end position="186"/>
    </location>
</feature>
<feature type="region of interest" description="Disordered" evidence="2">
    <location>
        <begin position="141"/>
        <end position="165"/>
    </location>
</feature>
<feature type="compositionally biased region" description="Polar residues" evidence="2">
    <location>
        <begin position="142"/>
        <end position="159"/>
    </location>
</feature>
<feature type="glycosylation site" description="N-linked (GlcNAc...) asparagine" evidence="1">
    <location>
        <position position="47"/>
    </location>
</feature>
<evidence type="ECO:0000255" key="1"/>
<evidence type="ECO:0000256" key="2">
    <source>
        <dbReference type="SAM" id="MobiDB-lite"/>
    </source>
</evidence>
<evidence type="ECO:0000305" key="3"/>
<dbReference type="EMBL" id="BC065898">
    <property type="protein sequence ID" value="AAH65898.1"/>
    <property type="molecule type" value="mRNA"/>
</dbReference>
<dbReference type="RefSeq" id="NP_991210.1">
    <property type="nucleotide sequence ID" value="NM_205647.1"/>
</dbReference>
<dbReference type="FunCoup" id="Q6NZZ3">
    <property type="interactions" value="1188"/>
</dbReference>
<dbReference type="STRING" id="7955.ENSDARP00000014999"/>
<dbReference type="PaxDb" id="7955-ENSDARP00000014999"/>
<dbReference type="Ensembl" id="ENSDART00000016677">
    <property type="protein sequence ID" value="ENSDARP00000014999"/>
    <property type="gene ID" value="ENSDARG00000017337"/>
</dbReference>
<dbReference type="GeneID" id="402944"/>
<dbReference type="KEGG" id="dre:402944"/>
<dbReference type="AGR" id="ZFIN:ZDB-GENE-040426-1908"/>
<dbReference type="ZFIN" id="ZDB-GENE-040426-1908">
    <property type="gene designation" value="zgc:77929"/>
</dbReference>
<dbReference type="eggNOG" id="ENOG502RXJP">
    <property type="taxonomic scope" value="Eukaryota"/>
</dbReference>
<dbReference type="HOGENOM" id="CLU_113576_1_0_1"/>
<dbReference type="InParanoid" id="Q6NZZ3"/>
<dbReference type="OMA" id="FGETAYS"/>
<dbReference type="OrthoDB" id="10046613at2759"/>
<dbReference type="PhylomeDB" id="Q6NZZ3"/>
<dbReference type="Reactome" id="R-DRE-6798695">
    <property type="pathway name" value="Neutrophil degranulation"/>
</dbReference>
<dbReference type="PRO" id="PR:Q6NZZ3"/>
<dbReference type="Proteomes" id="UP000000437">
    <property type="component" value="Chromosome 11"/>
</dbReference>
<dbReference type="Bgee" id="ENSDARG00000017337">
    <property type="expression patterns" value="Expressed in cardiac ventricle and 28 other cell types or tissues"/>
</dbReference>
<dbReference type="GO" id="GO:0005576">
    <property type="term" value="C:extracellular region"/>
    <property type="evidence" value="ECO:0007669"/>
    <property type="project" value="UniProtKB-SubCell"/>
</dbReference>
<dbReference type="InterPro" id="IPR031420">
    <property type="entry name" value="UPF0669"/>
</dbReference>
<dbReference type="PANTHER" id="PTHR31703">
    <property type="entry name" value="UPF0669 PROTEIN C6ORF120"/>
    <property type="match status" value="1"/>
</dbReference>
<dbReference type="PANTHER" id="PTHR31703:SF2">
    <property type="entry name" value="UPF0669 PROTEIN C6ORF120"/>
    <property type="match status" value="1"/>
</dbReference>
<dbReference type="Pfam" id="PF17065">
    <property type="entry name" value="UPF0669"/>
    <property type="match status" value="1"/>
</dbReference>
<gene>
    <name type="ORF">zgc:77929</name>
</gene>
<accession>Q6NZZ3</accession>
<reference key="1">
    <citation type="submission" date="2004-01" db="EMBL/GenBank/DDBJ databases">
        <authorList>
            <consortium name="NIH - Zebrafish Gene Collection (ZGC) project"/>
        </authorList>
    </citation>
    <scope>NUCLEOTIDE SEQUENCE [LARGE SCALE MRNA]</scope>
</reference>
<organism>
    <name type="scientific">Danio rerio</name>
    <name type="common">Zebrafish</name>
    <name type="synonym">Brachydanio rerio</name>
    <dbReference type="NCBI Taxonomy" id="7955"/>
    <lineage>
        <taxon>Eukaryota</taxon>
        <taxon>Metazoa</taxon>
        <taxon>Chordata</taxon>
        <taxon>Craniata</taxon>
        <taxon>Vertebrata</taxon>
        <taxon>Euteleostomi</taxon>
        <taxon>Actinopterygii</taxon>
        <taxon>Neopterygii</taxon>
        <taxon>Teleostei</taxon>
        <taxon>Ostariophysi</taxon>
        <taxon>Cypriniformes</taxon>
        <taxon>Danionidae</taxon>
        <taxon>Danioninae</taxon>
        <taxon>Danio</taxon>
    </lineage>
</organism>
<name>CF120_DANRE</name>
<sequence>MVPFWAGLLVLSALPQTLGFLQHSEEPYVPGEWVLLHVVQGHIGAGNYSYLRLNHEGRIILHMQSLKGDADLYVSDKTLRPNFDTYKLQSTTCGPDVVVVPGDFLRPVGIGIYGHPSYMESEFEMKVFYDQKALAEIEIEKNSYSSDETPGQPRQSQGPEDTEEEEESILWTILIGILKIILEILF</sequence>
<keyword id="KW-0325">Glycoprotein</keyword>
<keyword id="KW-1185">Reference proteome</keyword>
<keyword id="KW-0964">Secreted</keyword>
<keyword id="KW-0732">Signal</keyword>
<comment type="subcellular location">
    <subcellularLocation>
        <location evidence="3">Secreted</location>
    </subcellularLocation>
</comment>
<comment type="similarity">
    <text evidence="3">Belongs to the UPF0669 family.</text>
</comment>
<proteinExistence type="evidence at transcript level"/>